<name>CLM3_MOUSE</name>
<reference key="1">
    <citation type="journal article" date="2003" name="J. Immunol.">
        <title>CMRF-35-like molecule-1, a novel mouse myeloid receptor, can inhibit osteoclast formation.</title>
        <authorList>
            <person name="Chung D.-H."/>
            <person name="Humphrey M.B."/>
            <person name="Nakamura M.C."/>
            <person name="Ginzinger D.G."/>
            <person name="Seaman W.E."/>
            <person name="Daws M.R."/>
        </authorList>
    </citation>
    <scope>NUCLEOTIDE SEQUENCE [MRNA]</scope>
    <source>
        <strain>C57BL/6J</strain>
    </source>
</reference>
<reference key="2">
    <citation type="journal article" date="2010" name="J. Biol. Chem.">
        <title>Characterization of leukocyte mono-immunoglobulin-like receptor 7 (LMIR7)/CLM-3 as an activating receptor: its similarities to and differences from LMIR4/CLM-5.</title>
        <authorList>
            <person name="Enomoto Y."/>
            <person name="Yamanishi Y."/>
            <person name="Izawa K."/>
            <person name="Kaitani A."/>
            <person name="Takahashi M."/>
            <person name="Maehara A."/>
            <person name="Oki T."/>
            <person name="Takamatsu R."/>
            <person name="Kajikawa M."/>
            <person name="Takai T."/>
            <person name="Kitamura T."/>
            <person name="Kitaura J."/>
        </authorList>
    </citation>
    <scope>NUCLEOTIDE SEQUENCE [MRNA]</scope>
    <scope>FUNCTION</scope>
    <scope>INTERACTION WITH FCER1G</scope>
    <scope>TISSUE SPECIFICITY</scope>
    <scope>MUTAGENESIS OF 177-ASN--TRP-182 AND 189-SER--VAL-198</scope>
    <source>
        <strain>C57BL/6J</strain>
        <tissue>Mast cell</tissue>
    </source>
</reference>
<reference key="3">
    <citation type="journal article" date="2009" name="PLoS Biol.">
        <title>Lineage-specific biology revealed by a finished genome assembly of the mouse.</title>
        <authorList>
            <person name="Church D.M."/>
            <person name="Goodstadt L."/>
            <person name="Hillier L.W."/>
            <person name="Zody M.C."/>
            <person name="Goldstein S."/>
            <person name="She X."/>
            <person name="Bult C.J."/>
            <person name="Agarwala R."/>
            <person name="Cherry J.L."/>
            <person name="DiCuccio M."/>
            <person name="Hlavina W."/>
            <person name="Kapustin Y."/>
            <person name="Meric P."/>
            <person name="Maglott D."/>
            <person name="Birtle Z."/>
            <person name="Marques A.C."/>
            <person name="Graves T."/>
            <person name="Zhou S."/>
            <person name="Teague B."/>
            <person name="Potamousis K."/>
            <person name="Churas C."/>
            <person name="Place M."/>
            <person name="Herschleb J."/>
            <person name="Runnheim R."/>
            <person name="Forrest D."/>
            <person name="Amos-Landgraf J."/>
            <person name="Schwartz D.C."/>
            <person name="Cheng Z."/>
            <person name="Lindblad-Toh K."/>
            <person name="Eichler E.E."/>
            <person name="Ponting C.P."/>
        </authorList>
    </citation>
    <scope>NUCLEOTIDE SEQUENCE [LARGE SCALE GENOMIC DNA]</scope>
    <source>
        <strain>C57BL/6J</strain>
    </source>
</reference>
<reference key="4">
    <citation type="journal article" date="2004" name="Genome Res.">
        <title>The status, quality, and expansion of the NIH full-length cDNA project: the Mammalian Gene Collection (MGC).</title>
        <authorList>
            <consortium name="The MGC Project Team"/>
        </authorList>
    </citation>
    <scope>NUCLEOTIDE SEQUENCE [LARGE SCALE MRNA]</scope>
    <source>
        <tissue>Brain</tissue>
    </source>
</reference>
<reference key="5">
    <citation type="journal article" date="2011" name="J. Immunol.">
        <title>CMRF-35-like molecule 3 preferentially promotes TLR9-triggered proinflammatory cytokine production in macrophages by enhancing TNF receptor-associated factor 6 ubiquitination.</title>
        <authorList>
            <person name="Wu Y."/>
            <person name="Zhu X."/>
            <person name="Li N."/>
            <person name="Chen T."/>
            <person name="Yang M."/>
            <person name="Yao M."/>
            <person name="Liu X."/>
            <person name="Jin B."/>
            <person name="Wang X."/>
            <person name="Cao X."/>
        </authorList>
    </citation>
    <scope>FUNCTION</scope>
    <scope>INTERACTION WITH TLR9</scope>
    <scope>SUBCELLULAR LOCATION</scope>
    <scope>TISSUE SPECIFICITY</scope>
    <scope>INDUCTION</scope>
</reference>
<evidence type="ECO:0000250" key="1"/>
<evidence type="ECO:0000255" key="2"/>
<evidence type="ECO:0000269" key="3">
    <source>
    </source>
</evidence>
<evidence type="ECO:0000269" key="4">
    <source>
    </source>
</evidence>
<evidence type="ECO:0000303" key="5">
    <source>
    </source>
</evidence>
<evidence type="ECO:0000305" key="6"/>
<evidence type="ECO:0000312" key="7">
    <source>
        <dbReference type="MGI" id="MGI:2687214"/>
    </source>
</evidence>
<organism>
    <name type="scientific">Mus musculus</name>
    <name type="common">Mouse</name>
    <dbReference type="NCBI Taxonomy" id="10090"/>
    <lineage>
        <taxon>Eukaryota</taxon>
        <taxon>Metazoa</taxon>
        <taxon>Chordata</taxon>
        <taxon>Craniata</taxon>
        <taxon>Vertebrata</taxon>
        <taxon>Euteleostomi</taxon>
        <taxon>Mammalia</taxon>
        <taxon>Eutheria</taxon>
        <taxon>Euarchontoglires</taxon>
        <taxon>Glires</taxon>
        <taxon>Rodentia</taxon>
        <taxon>Myomorpha</taxon>
        <taxon>Muroidea</taxon>
        <taxon>Muridae</taxon>
        <taxon>Murinae</taxon>
        <taxon>Mus</taxon>
        <taxon>Mus</taxon>
    </lineage>
</organism>
<comment type="function">
    <text evidence="3 4">Acts as an activating receptor inducing cytokine production in mast cells. Can act as a positive regulator of TLR9 signaling in macrophages, leading to enhanced production of pro-inflammatory cytokines.</text>
</comment>
<comment type="subunit">
    <text evidence="3 4">Interacts with FCER1G; the interaction may be indirect. Interacts with TLR9.</text>
</comment>
<comment type="subcellular location">
    <subcellularLocation>
        <location evidence="1">Cell membrane</location>
        <topology evidence="1">Single-pass type I membrane protein</topology>
    </subcellularLocation>
    <subcellularLocation>
        <location evidence="4">Early endosome</location>
    </subcellularLocation>
    <subcellularLocation>
        <location evidence="4">Lysosome</location>
    </subcellularLocation>
</comment>
<comment type="tissue specificity">
    <text evidence="3 4">Highly expressed in bone marrow-derived mast cells and macrophages, peripheral blood monocytes and CD11c+ cells, with weaker expression detected in CD11b cells in bone marrow and peripheral blood. Not detected in B220+ cells in bone marrow or spleen, in Thy-1.2+ or CD3+ cells in peripheral blood, spleen or thymus, or in NK1.1+ cells in spleen (at protein level). Widely expressed in various tissues including heart, liver, spleen, lung, kidney, brain, bone marrow, thymus, axillary lymph node and mesenteric lymph node. Highly expressed in macrophage cell lines J774.1 and RAW 264.7 and in mast cell line MC/9. Weak expression detected in B-lineage cell lines WEHI-231 and A20 and in dendritic cell line DC2.4. Not detected in other myeloid cell lines or T-lineage cell lines.</text>
</comment>
<comment type="induction">
    <text evidence="4">Down-regulated in macrophages by single-stranded CpG oligodeoxynucleotide stimulation.</text>
</comment>
<comment type="similarity">
    <text evidence="6">Belongs to the CD300 family.</text>
</comment>
<accession>Q6SJQ5</accession>
<protein>
    <recommendedName>
        <fullName evidence="5">CMRF35-like molecule 3</fullName>
        <shortName evidence="5">CLM-3</shortName>
    </recommendedName>
    <alternativeName>
        <fullName evidence="6">CD300 antigen-like family member H</fullName>
    </alternativeName>
    <alternativeName>
        <fullName evidence="7">CD300 molecule-like family member D3</fullName>
    </alternativeName>
</protein>
<sequence>MWQFPALLFLFLPGCCTAQDPVTGPEEVSGQEQGSLTVQCRYDSGWKDYKKYWCRGAYWKSCEILVETDASEQLVKENRVSIRDDQTDFIFTVTMEDLRMSDADIYWCGITKAGTDPMFKVNVNIDPEISTTIMTTTATVLPSTVLTSTVLTSTVLTPTTPTTESIGTENIGQVTQNSLFIWSLLSSISFLLMVFVVVPLLLSMLSAVLWVNRPQRHYGGGEIGLVETHRSDALDGEKHFPGDEK</sequence>
<keyword id="KW-1003">Cell membrane</keyword>
<keyword id="KW-1015">Disulfide bond</keyword>
<keyword id="KW-0967">Endosome</keyword>
<keyword id="KW-0391">Immunity</keyword>
<keyword id="KW-0393">Immunoglobulin domain</keyword>
<keyword id="KW-0458">Lysosome</keyword>
<keyword id="KW-0472">Membrane</keyword>
<keyword id="KW-0675">Receptor</keyword>
<keyword id="KW-1185">Reference proteome</keyword>
<keyword id="KW-0732">Signal</keyword>
<keyword id="KW-0812">Transmembrane</keyword>
<keyword id="KW-1133">Transmembrane helix</keyword>
<dbReference type="EMBL" id="AY457049">
    <property type="protein sequence ID" value="AAR27940.1"/>
    <property type="molecule type" value="mRNA"/>
</dbReference>
<dbReference type="EMBL" id="AL607025">
    <property type="status" value="NOT_ANNOTATED_CDS"/>
    <property type="molecule type" value="Genomic_DNA"/>
</dbReference>
<dbReference type="EMBL" id="BC119352">
    <property type="protein sequence ID" value="AAI19353.1"/>
    <property type="molecule type" value="mRNA"/>
</dbReference>
<dbReference type="EMBL" id="BC120623">
    <property type="protein sequence ID" value="AAI20624.1"/>
    <property type="molecule type" value="mRNA"/>
</dbReference>
<dbReference type="CCDS" id="CCDS25617.1"/>
<dbReference type="RefSeq" id="NP_954671.1">
    <property type="nucleotide sequence ID" value="NM_199201.2"/>
</dbReference>
<dbReference type="SMR" id="Q6SJQ5"/>
<dbReference type="FunCoup" id="Q6SJQ5">
    <property type="interactions" value="681"/>
</dbReference>
<dbReference type="iPTMnet" id="Q6SJQ5"/>
<dbReference type="PhosphoSitePlus" id="Q6SJQ5"/>
<dbReference type="PaxDb" id="10090-ENSMUSP00000090116"/>
<dbReference type="DNASU" id="382551"/>
<dbReference type="Ensembl" id="ENSMUST00000092459.4">
    <property type="protein sequence ID" value="ENSMUSP00000090116.4"/>
    <property type="gene ID" value="ENSMUSG00000069607.5"/>
</dbReference>
<dbReference type="GeneID" id="382551"/>
<dbReference type="KEGG" id="mmu:382551"/>
<dbReference type="UCSC" id="uc007mgi.2">
    <property type="organism name" value="mouse"/>
</dbReference>
<dbReference type="AGR" id="MGI:2687214"/>
<dbReference type="CTD" id="382551"/>
<dbReference type="MGI" id="MGI:2687214">
    <property type="gene designation" value="Cd300ld3"/>
</dbReference>
<dbReference type="VEuPathDB" id="HostDB:ENSMUSG00000069607"/>
<dbReference type="eggNOG" id="ENOG502S7MA">
    <property type="taxonomic scope" value="Eukaryota"/>
</dbReference>
<dbReference type="GeneTree" id="ENSGT00940000154332"/>
<dbReference type="HOGENOM" id="CLU_051023_3_0_1"/>
<dbReference type="InParanoid" id="Q6SJQ5"/>
<dbReference type="OMA" id="MWQISAL"/>
<dbReference type="OrthoDB" id="8920197at2759"/>
<dbReference type="PhylomeDB" id="Q6SJQ5"/>
<dbReference type="TreeFam" id="TF334441"/>
<dbReference type="BioGRID-ORCS" id="382551">
    <property type="hits" value="5 hits in 39 CRISPR screens"/>
</dbReference>
<dbReference type="ChiTaRS" id="Cyth3">
    <property type="organism name" value="mouse"/>
</dbReference>
<dbReference type="PRO" id="PR:Q6SJQ5"/>
<dbReference type="Proteomes" id="UP000000589">
    <property type="component" value="Chromosome 11"/>
</dbReference>
<dbReference type="RNAct" id="Q6SJQ5">
    <property type="molecule type" value="protein"/>
</dbReference>
<dbReference type="Bgee" id="ENSMUSG00000069607">
    <property type="expression patterns" value="Expressed in granulocyte and 38 other cell types or tissues"/>
</dbReference>
<dbReference type="GO" id="GO:0005769">
    <property type="term" value="C:early endosome"/>
    <property type="evidence" value="ECO:0007669"/>
    <property type="project" value="UniProtKB-SubCell"/>
</dbReference>
<dbReference type="GO" id="GO:0005768">
    <property type="term" value="C:endosome"/>
    <property type="evidence" value="ECO:0000314"/>
    <property type="project" value="MGI"/>
</dbReference>
<dbReference type="GO" id="GO:0005764">
    <property type="term" value="C:lysosome"/>
    <property type="evidence" value="ECO:0000314"/>
    <property type="project" value="MGI"/>
</dbReference>
<dbReference type="GO" id="GO:0005886">
    <property type="term" value="C:plasma membrane"/>
    <property type="evidence" value="ECO:0007669"/>
    <property type="project" value="UniProtKB-SubCell"/>
</dbReference>
<dbReference type="GO" id="GO:0031398">
    <property type="term" value="P:positive regulation of protein ubiquitination"/>
    <property type="evidence" value="ECO:0000314"/>
    <property type="project" value="MGI"/>
</dbReference>
<dbReference type="GO" id="GO:0034165">
    <property type="term" value="P:positive regulation of toll-like receptor 9 signaling pathway"/>
    <property type="evidence" value="ECO:0000314"/>
    <property type="project" value="MGI"/>
</dbReference>
<dbReference type="GO" id="GO:0034162">
    <property type="term" value="P:toll-like receptor 9 signaling pathway"/>
    <property type="evidence" value="ECO:0000314"/>
    <property type="project" value="MGI"/>
</dbReference>
<dbReference type="CDD" id="cd05716">
    <property type="entry name" value="IgV_pIgR_like"/>
    <property type="match status" value="1"/>
</dbReference>
<dbReference type="FunFam" id="2.60.40.10:FF:000370">
    <property type="entry name" value="CMRF35-like molecule 1"/>
    <property type="match status" value="1"/>
</dbReference>
<dbReference type="Gene3D" id="2.60.40.10">
    <property type="entry name" value="Immunoglobulins"/>
    <property type="match status" value="1"/>
</dbReference>
<dbReference type="InterPro" id="IPR050671">
    <property type="entry name" value="CD300_family_receptors"/>
</dbReference>
<dbReference type="InterPro" id="IPR036179">
    <property type="entry name" value="Ig-like_dom_sf"/>
</dbReference>
<dbReference type="InterPro" id="IPR013783">
    <property type="entry name" value="Ig-like_fold"/>
</dbReference>
<dbReference type="InterPro" id="IPR013106">
    <property type="entry name" value="Ig_V-set"/>
</dbReference>
<dbReference type="PANTHER" id="PTHR11860:SF101">
    <property type="entry name" value="CMRF35-LIKE MOLECULE 1"/>
    <property type="match status" value="1"/>
</dbReference>
<dbReference type="PANTHER" id="PTHR11860">
    <property type="entry name" value="POLYMERIC-IMMUNOGLOBULIN RECEPTOR"/>
    <property type="match status" value="1"/>
</dbReference>
<dbReference type="Pfam" id="PF07686">
    <property type="entry name" value="V-set"/>
    <property type="match status" value="1"/>
</dbReference>
<dbReference type="SUPFAM" id="SSF48726">
    <property type="entry name" value="Immunoglobulin"/>
    <property type="match status" value="1"/>
</dbReference>
<feature type="signal peptide" evidence="2">
    <location>
        <begin position="1"/>
        <end position="18"/>
    </location>
</feature>
<feature type="chain" id="PRO_0000320125" description="CMRF35-like molecule 3">
    <location>
        <begin position="19"/>
        <end position="245"/>
    </location>
</feature>
<feature type="topological domain" description="Extracellular" evidence="2">
    <location>
        <begin position="19"/>
        <end position="189"/>
    </location>
</feature>
<feature type="transmembrane region" description="Helical" evidence="2">
    <location>
        <begin position="190"/>
        <end position="210"/>
    </location>
</feature>
<feature type="topological domain" description="Cytoplasmic" evidence="2">
    <location>
        <begin position="211"/>
        <end position="245"/>
    </location>
</feature>
<feature type="domain" description="Ig-like V-type">
    <location>
        <begin position="19"/>
        <end position="124"/>
    </location>
</feature>
<feature type="region of interest" description="Important for maintaining surface expression and for interaction with FCER1G" evidence="3">
    <location>
        <begin position="177"/>
        <end position="182"/>
    </location>
</feature>
<feature type="region of interest" description="Important for maintaining surface expression and for interaction with FCER1G" evidence="3">
    <location>
        <begin position="189"/>
        <end position="198"/>
    </location>
</feature>
<feature type="disulfide bond" evidence="1">
    <location>
        <begin position="40"/>
        <end position="108"/>
    </location>
</feature>
<feature type="mutagenesis site" description="Increases surface expression in transfected pro-B cells and enhances interaction with FCER1G. Slightly increases surface expression and enhances interaction with FCER1G; when associated with 189-Y--L-198." evidence="3">
    <original>NSLFIW</original>
    <variation>SRPHTR</variation>
    <location>
        <begin position="177"/>
        <end position="182"/>
    </location>
</feature>
<feature type="mutagenesis site" description="Reduces surface expression in transfected pro-B cells and enhances interaction with FCER1G. Slightly increases surface expression in transfected pro-B cells and enhances interaction with FCER1G; when associated with 177-S--R-182." evidence="3">
    <original>SFLLMVFVVV</original>
    <variation>YFLLMVFVEL</variation>
    <location>
        <begin position="189"/>
        <end position="198"/>
    </location>
</feature>
<gene>
    <name evidence="7" type="primary">Cd300ld3</name>
    <name evidence="7" type="synonym">Cd300lh</name>
    <name evidence="5" type="synonym">Clm3</name>
    <name evidence="7" type="synonym">Lmir7</name>
</gene>
<proteinExistence type="evidence at protein level"/>